<name>TGFA1_MOUSE</name>
<organism>
    <name type="scientific">Mus musculus</name>
    <name type="common">Mouse</name>
    <dbReference type="NCBI Taxonomy" id="10090"/>
    <lineage>
        <taxon>Eukaryota</taxon>
        <taxon>Metazoa</taxon>
        <taxon>Chordata</taxon>
        <taxon>Craniata</taxon>
        <taxon>Vertebrata</taxon>
        <taxon>Euteleostomi</taxon>
        <taxon>Mammalia</taxon>
        <taxon>Eutheria</taxon>
        <taxon>Euarchontoglires</taxon>
        <taxon>Glires</taxon>
        <taxon>Rodentia</taxon>
        <taxon>Myomorpha</taxon>
        <taxon>Muroidea</taxon>
        <taxon>Muridae</taxon>
        <taxon>Murinae</taxon>
        <taxon>Mus</taxon>
        <taxon>Mus</taxon>
    </lineage>
</organism>
<evidence type="ECO:0000250" key="1"/>
<evidence type="ECO:0000250" key="2">
    <source>
        <dbReference type="UniProtKB" id="Q8WUH2"/>
    </source>
</evidence>
<evidence type="ECO:0000255" key="3">
    <source>
        <dbReference type="PROSITE-ProRule" id="PRU00795"/>
    </source>
</evidence>
<evidence type="ECO:0000269" key="4">
    <source>
    </source>
</evidence>
<evidence type="ECO:0000269" key="5">
    <source>
    </source>
</evidence>
<evidence type="ECO:0000303" key="6">
    <source>
    </source>
</evidence>
<evidence type="ECO:0000305" key="7"/>
<evidence type="ECO:0000305" key="8">
    <source>
    </source>
</evidence>
<gene>
    <name type="primary">Tgfbrap1</name>
</gene>
<sequence length="860" mass="97303">MMNIKAFTLVSAVERELLMGDRDHISIECVECCGRNLYVGTNDCFIYHFLLEEKAMPTGTATFVATKQLHRHLGFKKPVNELCAASALNRLLVLCDNSITLVNMLNLEPVPSGARIKGATTFAVNESPVNGDPFCVEVCIISVKRRTVQMFLVYEDRVQIVKEVSTPEQPLAVAVDGYFLCLALTTQYIILNYSTGLSQDLFPYCSEEKPPIVKRIGRQEFLLAGPGGLGMFATVAGISQRAPVHWSENVIGAAVCFPYVIALDDEFITVHSMLDQQQKQTLPFKEGHILQDFEGRVIVATSKGVYILVPLPLEKQIQDLLANRRVEEALVLAKGARRNIPKEKFQVMYRRILQQAGFIQFAQLQFLEAKELFRSSQLDVRELISLYPFLLPTSSSFTRSHPPLHEYADLNQLTQGDQEKMAKCKRFLMSYLNEIRSTEVANGYKEDIDTALLKLYAEADHDSLLDLLVTENFCLLTDSAAWLEKHKKYFALGLLYHYNKQDASAVQLWVNIVNGDIQDSTRSDLYEYIVDFLTYCLDQELVWTHADWLLQKSEEIGVQIFTKRPLDEQQQTSFNPDNIISSLKKYPKALVKYLEHLVIDRRLQKEEYHTHLAILYLEEVLRQRVSTGGKDVEATETQAKLRRLLQKSDLYRVHLLKEKVQGAGLPMESAILHGKLGEHEKALHILVHEMGDFSAAEDYCLWSSEGQGAACRQRLFHTLLAMYLRAGPSAQDLTVAAVDLLNHHAREFDVTQVLQLLPDTWSVQLLCPFLMGAMRDSIHARRTTQVALGLAKSENLIYMYDKMKLKGNAVRLSERELCQLCQNPFGEPVFVRYPNGGLVHTHCAASRHTAPSSPSPGTRT</sequence>
<feature type="chain" id="PRO_0000345406" description="Transforming growth factor-beta receptor-associated protein 1">
    <location>
        <begin position="1"/>
        <end position="860"/>
    </location>
</feature>
<feature type="domain" description="CNH" evidence="3">
    <location>
        <begin position="24"/>
        <end position="297"/>
    </location>
</feature>
<feature type="repeat" description="CHCR">
    <location>
        <begin position="564"/>
        <end position="732"/>
    </location>
</feature>
<feature type="splice variant" id="VSP_034944" description="In isoform 2." evidence="6">
    <original>MFATVAGISQRAPVHWS</original>
    <variation>EEGWGSLLMAPASCLLS</variation>
    <location>
        <begin position="231"/>
        <end position="247"/>
    </location>
</feature>
<feature type="splice variant" id="VSP_034945" description="In isoform 2." evidence="6">
    <location>
        <begin position="248"/>
        <end position="860"/>
    </location>
</feature>
<accession>Q3UR70</accession>
<accession>Q8BKN4</accession>
<protein>
    <recommendedName>
        <fullName>Transforming growth factor-beta receptor-associated protein 1</fullName>
        <shortName>TGF-beta receptor-associated protein 1</shortName>
        <shortName>TRAP-1</shortName>
        <shortName>TRAP1</shortName>
    </recommendedName>
</protein>
<comment type="function">
    <text evidence="1">Plays a role in the TGF-beta/activin signaling pathway. It associates with inactive heteromeric TGF-beta and activin receptor complexes, mainly through the type II receptor, and is released upon activation of signaling. May recruit SMAD4 to the vicinity of the receptor complex and facilitate its interaction with receptor-regulated Smads, such as SMAD2 (By similarity).</text>
</comment>
<comment type="function">
    <text evidence="2">Plays a role in vesicle-mediated protein trafficking of the endocytic membrane transport pathway. Believed to act as a component of the putative CORVET endosomal tethering complexes which is proposed to be involved in the Rab5-to-Rab7 endosome conversion probably implicating MON1A/B, and via binding SNAREs and SNARE complexes to mediate tethering and docking events during SNARE-mediated membrane fusion. The CORVET complex is proposed to function as a Rab5 effector to mediate early endosome fusion probably in specific endosome subpopulations. Functions predominantly in APPL1-containing endosomes and in degradative but not recycling trafficking of endocytosed cargo (By similarity).</text>
</comment>
<comment type="subunit">
    <text evidence="2 5 8">Interacts with TGFBR2 and ACVR2B; in the absence of ligand stimulation. Interacts with TGFBR1, ACVRL1, BMPR1A and ACVR1B; in the absence of ligand stimulation and to a less extent. Interacts with SMAD4; the interaction seems to be mutually exclusive with the interaction of SMAD4 and phosphorylated SMAD2. May interact with ALOX5 (By similarity). Interacts with RAB5C. Interacts with VPS8, VPS11 and VPS16. Component of the putative class C core vacuole/endosome tethering (CORVET) complex; the core of which composed of the class C Vps proteins VPS11, VPS16, VPS18 and VPS33A, is associated with VPS8 and TGFBRAP1 (PubMed:25266290).</text>
</comment>
<comment type="subcellular location">
    <subcellularLocation>
        <location>Cytoplasm</location>
    </subcellularLocation>
    <subcellularLocation>
        <location evidence="2">Early endosome</location>
    </subcellularLocation>
    <text evidence="2">Colocalizes with TGF-beta receptors in the absence of signaling.</text>
</comment>
<comment type="alternative products">
    <event type="alternative splicing"/>
    <isoform>
        <id>Q3UR70-1</id>
        <name>1</name>
        <sequence type="displayed"/>
    </isoform>
    <isoform>
        <id>Q3UR70-2</id>
        <name>2</name>
        <sequence type="described" ref="VSP_034944 VSP_034945"/>
    </isoform>
</comment>
<comment type="disruption phenotype">
    <text evidence="4">Embryonic lethal, both before blastula stage or during gastrulation.</text>
</comment>
<comment type="similarity">
    <text evidence="7">Belongs to the TRAP1 family.</text>
</comment>
<dbReference type="EMBL" id="AK051333">
    <property type="protein sequence ID" value="BAC34606.1"/>
    <property type="molecule type" value="mRNA"/>
</dbReference>
<dbReference type="EMBL" id="AK141742">
    <property type="protein sequence ID" value="BAE24818.1"/>
    <property type="molecule type" value="mRNA"/>
</dbReference>
<dbReference type="EMBL" id="AK159332">
    <property type="protein sequence ID" value="BAE34997.1"/>
    <property type="molecule type" value="mRNA"/>
</dbReference>
<dbReference type="EMBL" id="CH466589">
    <property type="protein sequence ID" value="EDK96916.1"/>
    <property type="molecule type" value="Genomic_DNA"/>
</dbReference>
<dbReference type="EMBL" id="BC138866">
    <property type="protein sequence ID" value="AAI38867.1"/>
    <property type="molecule type" value="mRNA"/>
</dbReference>
<dbReference type="EMBL" id="BC138867">
    <property type="protein sequence ID" value="AAI38868.1"/>
    <property type="molecule type" value="mRNA"/>
</dbReference>
<dbReference type="CCDS" id="CCDS14920.1">
    <molecule id="Q3UR70-1"/>
</dbReference>
<dbReference type="RefSeq" id="NP_001013043.1">
    <molecule id="Q3UR70-1"/>
    <property type="nucleotide sequence ID" value="NM_001013025.3"/>
</dbReference>
<dbReference type="RefSeq" id="NP_001344228.1">
    <molecule id="Q3UR70-1"/>
    <property type="nucleotide sequence ID" value="NM_001357299.1"/>
</dbReference>
<dbReference type="RefSeq" id="XP_006496364.1">
    <property type="nucleotide sequence ID" value="XM_006496301.3"/>
</dbReference>
<dbReference type="RefSeq" id="XP_006496365.1">
    <molecule id="Q3UR70-1"/>
    <property type="nucleotide sequence ID" value="XM_006496302.5"/>
</dbReference>
<dbReference type="RefSeq" id="XP_006496366.1">
    <molecule id="Q3UR70-1"/>
    <property type="nucleotide sequence ID" value="XM_006496303.4"/>
</dbReference>
<dbReference type="RefSeq" id="XP_030099012.1">
    <molecule id="Q3UR70-1"/>
    <property type="nucleotide sequence ID" value="XM_030243152.2"/>
</dbReference>
<dbReference type="SMR" id="Q3UR70"/>
<dbReference type="BioGRID" id="215781">
    <property type="interactions" value="10"/>
</dbReference>
<dbReference type="FunCoup" id="Q3UR70">
    <property type="interactions" value="2856"/>
</dbReference>
<dbReference type="IntAct" id="Q3UR70">
    <property type="interactions" value="1"/>
</dbReference>
<dbReference type="STRING" id="10090.ENSMUSP00000092624"/>
<dbReference type="iPTMnet" id="Q3UR70"/>
<dbReference type="PhosphoSitePlus" id="Q3UR70"/>
<dbReference type="PaxDb" id="10090-ENSMUSP00000092624"/>
<dbReference type="PeptideAtlas" id="Q3UR70"/>
<dbReference type="ProteomicsDB" id="263037">
    <molecule id="Q3UR70-1"/>
</dbReference>
<dbReference type="ProteomicsDB" id="263038">
    <molecule id="Q3UR70-2"/>
</dbReference>
<dbReference type="Pumba" id="Q3UR70"/>
<dbReference type="Antibodypedia" id="49233">
    <property type="antibodies" value="152 antibodies from 21 providers"/>
</dbReference>
<dbReference type="DNASU" id="73122"/>
<dbReference type="Ensembl" id="ENSMUST00000095014.8">
    <molecule id="Q3UR70-1"/>
    <property type="protein sequence ID" value="ENSMUSP00000092624.2"/>
    <property type="gene ID" value="ENSMUSG00000070939.10"/>
</dbReference>
<dbReference type="Ensembl" id="ENSMUST00000186694.7">
    <molecule id="Q3UR70-1"/>
    <property type="protein sequence ID" value="ENSMUSP00000140132.2"/>
    <property type="gene ID" value="ENSMUSG00000070939.10"/>
</dbReference>
<dbReference type="GeneID" id="73122"/>
<dbReference type="KEGG" id="mmu:73122"/>
<dbReference type="UCSC" id="uc007ave.1">
    <molecule id="Q3UR70-1"/>
    <property type="organism name" value="mouse"/>
</dbReference>
<dbReference type="UCSC" id="uc007avh.1">
    <molecule id="Q3UR70-2"/>
    <property type="organism name" value="mouse"/>
</dbReference>
<dbReference type="AGR" id="MGI:2447427"/>
<dbReference type="CTD" id="9392"/>
<dbReference type="MGI" id="MGI:2447427">
    <property type="gene designation" value="Tgfbrap1"/>
</dbReference>
<dbReference type="VEuPathDB" id="HostDB:ENSMUSG00000070939"/>
<dbReference type="eggNOG" id="KOG2063">
    <property type="taxonomic scope" value="Eukaryota"/>
</dbReference>
<dbReference type="GeneTree" id="ENSGT00530000063596"/>
<dbReference type="HOGENOM" id="CLU_004190_3_0_1"/>
<dbReference type="InParanoid" id="Q3UR70"/>
<dbReference type="OMA" id="MFVTSEG"/>
<dbReference type="OrthoDB" id="10258882at2759"/>
<dbReference type="PhylomeDB" id="Q3UR70"/>
<dbReference type="TreeFam" id="TF328650"/>
<dbReference type="BioGRID-ORCS" id="73122">
    <property type="hits" value="4 hits in 78 CRISPR screens"/>
</dbReference>
<dbReference type="ChiTaRS" id="Tgfbrap1">
    <property type="organism name" value="mouse"/>
</dbReference>
<dbReference type="PRO" id="PR:Q3UR70"/>
<dbReference type="Proteomes" id="UP000000589">
    <property type="component" value="Chromosome 1"/>
</dbReference>
<dbReference type="RNAct" id="Q3UR70">
    <property type="molecule type" value="protein"/>
</dbReference>
<dbReference type="Bgee" id="ENSMUSG00000070939">
    <property type="expression patterns" value="Expressed in secondary oocyte and 221 other cell types or tissues"/>
</dbReference>
<dbReference type="ExpressionAtlas" id="Q3UR70">
    <property type="expression patterns" value="baseline and differential"/>
</dbReference>
<dbReference type="GO" id="GO:0033263">
    <property type="term" value="C:CORVET complex"/>
    <property type="evidence" value="ECO:0000314"/>
    <property type="project" value="UniProtKB"/>
</dbReference>
<dbReference type="GO" id="GO:0005769">
    <property type="term" value="C:early endosome"/>
    <property type="evidence" value="ECO:0007669"/>
    <property type="project" value="UniProtKB-SubCell"/>
</dbReference>
<dbReference type="GO" id="GO:0016020">
    <property type="term" value="C:membrane"/>
    <property type="evidence" value="ECO:0007669"/>
    <property type="project" value="Ensembl"/>
</dbReference>
<dbReference type="GO" id="GO:0046332">
    <property type="term" value="F:SMAD binding"/>
    <property type="evidence" value="ECO:0007669"/>
    <property type="project" value="Ensembl"/>
</dbReference>
<dbReference type="GO" id="GO:0005160">
    <property type="term" value="F:transforming growth factor beta receptor binding"/>
    <property type="evidence" value="ECO:0007669"/>
    <property type="project" value="Ensembl"/>
</dbReference>
<dbReference type="GO" id="GO:0034058">
    <property type="term" value="P:endosomal vesicle fusion"/>
    <property type="evidence" value="ECO:0007669"/>
    <property type="project" value="Ensembl"/>
</dbReference>
<dbReference type="GO" id="GO:0008333">
    <property type="term" value="P:endosome to lysosome transport"/>
    <property type="evidence" value="ECO:0007669"/>
    <property type="project" value="Ensembl"/>
</dbReference>
<dbReference type="GO" id="GO:0006886">
    <property type="term" value="P:intracellular protein transport"/>
    <property type="evidence" value="ECO:0007669"/>
    <property type="project" value="InterPro"/>
</dbReference>
<dbReference type="GO" id="GO:0006355">
    <property type="term" value="P:regulation of DNA-templated transcription"/>
    <property type="evidence" value="ECO:0007669"/>
    <property type="project" value="Ensembl"/>
</dbReference>
<dbReference type="GO" id="GO:0007165">
    <property type="term" value="P:signal transduction"/>
    <property type="evidence" value="ECO:0007669"/>
    <property type="project" value="Ensembl"/>
</dbReference>
<dbReference type="InterPro" id="IPR000547">
    <property type="entry name" value="Clathrin_H-chain/VPS_repeat"/>
</dbReference>
<dbReference type="InterPro" id="IPR001180">
    <property type="entry name" value="CNH_dom"/>
</dbReference>
<dbReference type="InterPro" id="IPR032914">
    <property type="entry name" value="Vam6/VPS39/TRAP1"/>
</dbReference>
<dbReference type="InterPro" id="IPR019452">
    <property type="entry name" value="VPS39/TGF_beta_rcpt-assoc_1"/>
</dbReference>
<dbReference type="InterPro" id="IPR019453">
    <property type="entry name" value="VPS39/TGFA1_Znf"/>
</dbReference>
<dbReference type="PANTHER" id="PTHR12894">
    <property type="entry name" value="CNH DOMAIN CONTAINING"/>
    <property type="match status" value="1"/>
</dbReference>
<dbReference type="PANTHER" id="PTHR12894:SF27">
    <property type="entry name" value="TRANSFORMING GROWTH FACTOR-BETA RECEPTOR-ASSOCIATED PROTEIN 1"/>
    <property type="match status" value="1"/>
</dbReference>
<dbReference type="Pfam" id="PF00780">
    <property type="entry name" value="CNH"/>
    <property type="match status" value="1"/>
</dbReference>
<dbReference type="Pfam" id="PF10366">
    <property type="entry name" value="Vps39_1"/>
    <property type="match status" value="1"/>
</dbReference>
<dbReference type="Pfam" id="PF10367">
    <property type="entry name" value="zf-Vps39_C"/>
    <property type="match status" value="1"/>
</dbReference>
<dbReference type="PROSITE" id="PS50236">
    <property type="entry name" value="CHCR"/>
    <property type="match status" value="1"/>
</dbReference>
<dbReference type="PROSITE" id="PS50219">
    <property type="entry name" value="CNH"/>
    <property type="match status" value="1"/>
</dbReference>
<keyword id="KW-0025">Alternative splicing</keyword>
<keyword id="KW-0963">Cytoplasm</keyword>
<keyword id="KW-0967">Endosome</keyword>
<keyword id="KW-0653">Protein transport</keyword>
<keyword id="KW-1185">Reference proteome</keyword>
<keyword id="KW-0813">Transport</keyword>
<proteinExistence type="evidence at protein level"/>
<reference key="1">
    <citation type="journal article" date="2005" name="Science">
        <title>The transcriptional landscape of the mammalian genome.</title>
        <authorList>
            <person name="Carninci P."/>
            <person name="Kasukawa T."/>
            <person name="Katayama S."/>
            <person name="Gough J."/>
            <person name="Frith M.C."/>
            <person name="Maeda N."/>
            <person name="Oyama R."/>
            <person name="Ravasi T."/>
            <person name="Lenhard B."/>
            <person name="Wells C."/>
            <person name="Kodzius R."/>
            <person name="Shimokawa K."/>
            <person name="Bajic V.B."/>
            <person name="Brenner S.E."/>
            <person name="Batalov S."/>
            <person name="Forrest A.R."/>
            <person name="Zavolan M."/>
            <person name="Davis M.J."/>
            <person name="Wilming L.G."/>
            <person name="Aidinis V."/>
            <person name="Allen J.E."/>
            <person name="Ambesi-Impiombato A."/>
            <person name="Apweiler R."/>
            <person name="Aturaliya R.N."/>
            <person name="Bailey T.L."/>
            <person name="Bansal M."/>
            <person name="Baxter L."/>
            <person name="Beisel K.W."/>
            <person name="Bersano T."/>
            <person name="Bono H."/>
            <person name="Chalk A.M."/>
            <person name="Chiu K.P."/>
            <person name="Choudhary V."/>
            <person name="Christoffels A."/>
            <person name="Clutterbuck D.R."/>
            <person name="Crowe M.L."/>
            <person name="Dalla E."/>
            <person name="Dalrymple B.P."/>
            <person name="de Bono B."/>
            <person name="Della Gatta G."/>
            <person name="di Bernardo D."/>
            <person name="Down T."/>
            <person name="Engstrom P."/>
            <person name="Fagiolini M."/>
            <person name="Faulkner G."/>
            <person name="Fletcher C.F."/>
            <person name="Fukushima T."/>
            <person name="Furuno M."/>
            <person name="Futaki S."/>
            <person name="Gariboldi M."/>
            <person name="Georgii-Hemming P."/>
            <person name="Gingeras T.R."/>
            <person name="Gojobori T."/>
            <person name="Green R.E."/>
            <person name="Gustincich S."/>
            <person name="Harbers M."/>
            <person name="Hayashi Y."/>
            <person name="Hensch T.K."/>
            <person name="Hirokawa N."/>
            <person name="Hill D."/>
            <person name="Huminiecki L."/>
            <person name="Iacono M."/>
            <person name="Ikeo K."/>
            <person name="Iwama A."/>
            <person name="Ishikawa T."/>
            <person name="Jakt M."/>
            <person name="Kanapin A."/>
            <person name="Katoh M."/>
            <person name="Kawasawa Y."/>
            <person name="Kelso J."/>
            <person name="Kitamura H."/>
            <person name="Kitano H."/>
            <person name="Kollias G."/>
            <person name="Krishnan S.P."/>
            <person name="Kruger A."/>
            <person name="Kummerfeld S.K."/>
            <person name="Kurochkin I.V."/>
            <person name="Lareau L.F."/>
            <person name="Lazarevic D."/>
            <person name="Lipovich L."/>
            <person name="Liu J."/>
            <person name="Liuni S."/>
            <person name="McWilliam S."/>
            <person name="Madan Babu M."/>
            <person name="Madera M."/>
            <person name="Marchionni L."/>
            <person name="Matsuda H."/>
            <person name="Matsuzawa S."/>
            <person name="Miki H."/>
            <person name="Mignone F."/>
            <person name="Miyake S."/>
            <person name="Morris K."/>
            <person name="Mottagui-Tabar S."/>
            <person name="Mulder N."/>
            <person name="Nakano N."/>
            <person name="Nakauchi H."/>
            <person name="Ng P."/>
            <person name="Nilsson R."/>
            <person name="Nishiguchi S."/>
            <person name="Nishikawa S."/>
            <person name="Nori F."/>
            <person name="Ohara O."/>
            <person name="Okazaki Y."/>
            <person name="Orlando V."/>
            <person name="Pang K.C."/>
            <person name="Pavan W.J."/>
            <person name="Pavesi G."/>
            <person name="Pesole G."/>
            <person name="Petrovsky N."/>
            <person name="Piazza S."/>
            <person name="Reed J."/>
            <person name="Reid J.F."/>
            <person name="Ring B.Z."/>
            <person name="Ringwald M."/>
            <person name="Rost B."/>
            <person name="Ruan Y."/>
            <person name="Salzberg S.L."/>
            <person name="Sandelin A."/>
            <person name="Schneider C."/>
            <person name="Schoenbach C."/>
            <person name="Sekiguchi K."/>
            <person name="Semple C.A."/>
            <person name="Seno S."/>
            <person name="Sessa L."/>
            <person name="Sheng Y."/>
            <person name="Shibata Y."/>
            <person name="Shimada H."/>
            <person name="Shimada K."/>
            <person name="Silva D."/>
            <person name="Sinclair B."/>
            <person name="Sperling S."/>
            <person name="Stupka E."/>
            <person name="Sugiura K."/>
            <person name="Sultana R."/>
            <person name="Takenaka Y."/>
            <person name="Taki K."/>
            <person name="Tammoja K."/>
            <person name="Tan S.L."/>
            <person name="Tang S."/>
            <person name="Taylor M.S."/>
            <person name="Tegner J."/>
            <person name="Teichmann S.A."/>
            <person name="Ueda H.R."/>
            <person name="van Nimwegen E."/>
            <person name="Verardo R."/>
            <person name="Wei C.L."/>
            <person name="Yagi K."/>
            <person name="Yamanishi H."/>
            <person name="Zabarovsky E."/>
            <person name="Zhu S."/>
            <person name="Zimmer A."/>
            <person name="Hide W."/>
            <person name="Bult C."/>
            <person name="Grimmond S.M."/>
            <person name="Teasdale R.D."/>
            <person name="Liu E.T."/>
            <person name="Brusic V."/>
            <person name="Quackenbush J."/>
            <person name="Wahlestedt C."/>
            <person name="Mattick J.S."/>
            <person name="Hume D.A."/>
            <person name="Kai C."/>
            <person name="Sasaki D."/>
            <person name="Tomaru Y."/>
            <person name="Fukuda S."/>
            <person name="Kanamori-Katayama M."/>
            <person name="Suzuki M."/>
            <person name="Aoki J."/>
            <person name="Arakawa T."/>
            <person name="Iida J."/>
            <person name="Imamura K."/>
            <person name="Itoh M."/>
            <person name="Kato T."/>
            <person name="Kawaji H."/>
            <person name="Kawagashira N."/>
            <person name="Kawashima T."/>
            <person name="Kojima M."/>
            <person name="Kondo S."/>
            <person name="Konno H."/>
            <person name="Nakano K."/>
            <person name="Ninomiya N."/>
            <person name="Nishio T."/>
            <person name="Okada M."/>
            <person name="Plessy C."/>
            <person name="Shibata K."/>
            <person name="Shiraki T."/>
            <person name="Suzuki S."/>
            <person name="Tagami M."/>
            <person name="Waki K."/>
            <person name="Watahiki A."/>
            <person name="Okamura-Oho Y."/>
            <person name="Suzuki H."/>
            <person name="Kawai J."/>
            <person name="Hayashizaki Y."/>
        </authorList>
    </citation>
    <scope>NUCLEOTIDE SEQUENCE [LARGE SCALE MRNA] (ISOFORMS 1 AND 2)</scope>
    <source>
        <strain>C57BL/6J</strain>
        <tissue>Osteoclast</tissue>
        <tissue>Spinal ganglion</tissue>
    </source>
</reference>
<reference key="2">
    <citation type="submission" date="2005-09" db="EMBL/GenBank/DDBJ databases">
        <authorList>
            <person name="Mural R.J."/>
            <person name="Adams M.D."/>
            <person name="Myers E.W."/>
            <person name="Smith H.O."/>
            <person name="Venter J.C."/>
        </authorList>
    </citation>
    <scope>NUCLEOTIDE SEQUENCE [LARGE SCALE GENOMIC DNA]</scope>
</reference>
<reference key="3">
    <citation type="journal article" date="2004" name="Genome Res.">
        <title>The status, quality, and expansion of the NIH full-length cDNA project: the Mammalian Gene Collection (MGC).</title>
        <authorList>
            <consortium name="The MGC Project Team"/>
        </authorList>
    </citation>
    <scope>NUCLEOTIDE SEQUENCE [LARGE SCALE MRNA] (ISOFORM 1)</scope>
    <source>
        <tissue>Brain</tissue>
    </source>
</reference>
<reference key="4">
    <citation type="journal article" date="2010" name="Cell">
        <title>A tissue-specific atlas of mouse protein phosphorylation and expression.</title>
        <authorList>
            <person name="Huttlin E.L."/>
            <person name="Jedrychowski M.P."/>
            <person name="Elias J.E."/>
            <person name="Goswami T."/>
            <person name="Rad R."/>
            <person name="Beausoleil S.A."/>
            <person name="Villen J."/>
            <person name="Haas W."/>
            <person name="Sowa M.E."/>
            <person name="Gygi S.P."/>
        </authorList>
    </citation>
    <scope>IDENTIFICATION BY MASS SPECTROMETRY [LARGE SCALE ANALYSIS]</scope>
    <source>
        <tissue>Brain</tissue>
        <tissue>Kidney</tissue>
        <tissue>Spleen</tissue>
        <tissue>Testis</tissue>
    </source>
</reference>
<reference key="5">
    <citation type="journal article" date="2011" name="Immunobiology">
        <title>The TGF-beta signaling modulators TRAP1/TGFBRAP1 and VPS39/Vam6/TLP are essential for early embryonic development.</title>
        <authorList>
            <person name="Messler S."/>
            <person name="Kropp S."/>
            <person name="Episkopou V."/>
            <person name="Felici A."/>
            <person name="Wurthner J."/>
            <person name="Lemke R."/>
            <person name="Jerabek-Willemsen M."/>
            <person name="Willecke R."/>
            <person name="Scheu S."/>
            <person name="Pfeffer K."/>
            <person name="Wurthner J.U."/>
        </authorList>
    </citation>
    <scope>DISRUPTION PHENOTYPE</scope>
</reference>
<reference key="6">
    <citation type="journal article" date="2014" name="Traffic">
        <title>Mammalian CORVET is required for fusion and conversion of distinct early endosome subpopulations.</title>
        <authorList>
            <person name="Perini E.D."/>
            <person name="Schaefer R."/>
            <person name="Stoeter M."/>
            <person name="Kalaidzidis Y."/>
            <person name="Zerial M."/>
        </authorList>
    </citation>
    <scope>INTERACTION WITH RAB5C</scope>
    <scope>SUBUNIT</scope>
</reference>